<keyword id="KW-0027">Amidation</keyword>
<keyword id="KW-0903">Direct protein sequencing</keyword>
<keyword id="KW-0527">Neuropeptide</keyword>
<keyword id="KW-0964">Secreted</keyword>
<proteinExistence type="evidence at protein level"/>
<reference evidence="3" key="1">
    <citation type="journal article" date="2009" name="Peptides">
        <title>Neuropeptides in Heteroptera: identification of allatotropin-related peptide and tachykinin-related peptides using MALDI-TOF mass spectrometry.</title>
        <authorList>
            <person name="Neupert S."/>
            <person name="Russell W.K."/>
            <person name="Russell D.H."/>
            <person name="Lopez J.D. Jr."/>
            <person name="Predel R."/>
            <person name="Nachman R.J."/>
        </authorList>
    </citation>
    <scope>PROTEIN SEQUENCE</scope>
    <scope>SUBCELLULAR LOCATION</scope>
    <scope>TISSUE SPECIFICITY</scope>
    <scope>AMIDATION AT ARG-10</scope>
    <source>
        <tissue evidence="1">Antennal lobe</tissue>
    </source>
</reference>
<protein>
    <recommendedName>
        <fullName evidence="2">Tachykinin-related peptide 2</fullName>
        <shortName evidence="2">TKRP-2</shortName>
    </recommendedName>
</protein>
<accession>P86558</accession>
<sequence>APAAGFFGMR</sequence>
<comment type="subcellular location">
    <subcellularLocation>
        <location evidence="1 3">Secreted</location>
    </subcellularLocation>
</comment>
<comment type="tissue specificity">
    <text evidence="1">Expressed in the antennal lobe (at protein level).</text>
</comment>
<evidence type="ECO:0000269" key="1">
    <source>
    </source>
</evidence>
<evidence type="ECO:0000303" key="2">
    <source>
    </source>
</evidence>
<evidence type="ECO:0000305" key="3"/>
<feature type="peptide" id="PRO_0000395627" description="Tachykinin-related peptide 2" evidence="1">
    <location>
        <begin position="1"/>
        <end position="10"/>
    </location>
</feature>
<feature type="modified residue" description="Arginine amide" evidence="1">
    <location>
        <position position="10"/>
    </location>
</feature>
<dbReference type="GO" id="GO:0005576">
    <property type="term" value="C:extracellular region"/>
    <property type="evidence" value="ECO:0007005"/>
    <property type="project" value="UniProtKB"/>
</dbReference>
<dbReference type="GO" id="GO:0007218">
    <property type="term" value="P:neuropeptide signaling pathway"/>
    <property type="evidence" value="ECO:0007669"/>
    <property type="project" value="UniProtKB-KW"/>
</dbReference>
<organism>
    <name type="scientific">Acrosternum hilare</name>
    <name type="common">Green stink bug</name>
    <name type="synonym">Nezara hilaris</name>
    <dbReference type="NCBI Taxonomy" id="244443"/>
    <lineage>
        <taxon>Eukaryota</taxon>
        <taxon>Metazoa</taxon>
        <taxon>Ecdysozoa</taxon>
        <taxon>Arthropoda</taxon>
        <taxon>Hexapoda</taxon>
        <taxon>Insecta</taxon>
        <taxon>Pterygota</taxon>
        <taxon>Neoptera</taxon>
        <taxon>Paraneoptera</taxon>
        <taxon>Hemiptera</taxon>
        <taxon>Heteroptera</taxon>
        <taxon>Panheteroptera</taxon>
        <taxon>Pentatomomorpha</taxon>
        <taxon>Pentatomoidea</taxon>
        <taxon>Pentatomidae</taxon>
        <taxon>Pentatominae</taxon>
        <taxon>Acrosternum</taxon>
    </lineage>
</organism>
<name>TRP2_ACRHI</name>